<accession>Q63HB0</accession>
<sequence length="465" mass="53937">MTIHIYNTLTRQKEEFTPLEENKVKMYVCGPTVYNYIHIGNARPPMVFDTVRRYLEYKGYDVQYVSNFTDVDDKLIKAANELGEDVPTIADRFVEAYFEDVTALGCKHATVHPRVTENMDIIIEFIQELVNKGYAYESEGDVYFRTKEFEGYGKLSHQPIADLRHGARIEVGEKKQDPLDFALWKAAKEGEIFWESPWGQGRPGWHIECSAMARKYLGDTIDIHAGGQDLAFPHHENEIAQSEALTGKTFARYWMHNGYININNEKMSKSLGNFILVHDIIKQYDPQLIRFFMLSVHYRHPINFSEELLQSTNNGLERIKTAYGNLKHRMESSTDLTDHNEKWLADLEKFQTAFEEAMNDDFNTANAITELYNVANHANQYLLEEHTSTVVIEAYVKQLETLFDILGLELAQEELLDEEIEALIQKRIEARKNRDFALSDQIRDDLKDRNIILEDTAQGTRWKRG</sequence>
<comment type="catalytic activity">
    <reaction evidence="1">
        <text>tRNA(Cys) + L-cysteine + ATP = L-cysteinyl-tRNA(Cys) + AMP + diphosphate</text>
        <dbReference type="Rhea" id="RHEA:17773"/>
        <dbReference type="Rhea" id="RHEA-COMP:9661"/>
        <dbReference type="Rhea" id="RHEA-COMP:9679"/>
        <dbReference type="ChEBI" id="CHEBI:30616"/>
        <dbReference type="ChEBI" id="CHEBI:33019"/>
        <dbReference type="ChEBI" id="CHEBI:35235"/>
        <dbReference type="ChEBI" id="CHEBI:78442"/>
        <dbReference type="ChEBI" id="CHEBI:78517"/>
        <dbReference type="ChEBI" id="CHEBI:456215"/>
        <dbReference type="EC" id="6.1.1.16"/>
    </reaction>
</comment>
<comment type="cofactor">
    <cofactor evidence="1">
        <name>Zn(2+)</name>
        <dbReference type="ChEBI" id="CHEBI:29105"/>
    </cofactor>
    <text evidence="1">Binds 1 zinc ion per subunit.</text>
</comment>
<comment type="subunit">
    <text evidence="1">Monomer.</text>
</comment>
<comment type="subcellular location">
    <subcellularLocation>
        <location evidence="1">Cytoplasm</location>
    </subcellularLocation>
</comment>
<comment type="similarity">
    <text evidence="1">Belongs to the class-I aminoacyl-tRNA synthetase family.</text>
</comment>
<organism>
    <name type="scientific">Bacillus cereus (strain ZK / E33L)</name>
    <dbReference type="NCBI Taxonomy" id="288681"/>
    <lineage>
        <taxon>Bacteria</taxon>
        <taxon>Bacillati</taxon>
        <taxon>Bacillota</taxon>
        <taxon>Bacilli</taxon>
        <taxon>Bacillales</taxon>
        <taxon>Bacillaceae</taxon>
        <taxon>Bacillus</taxon>
        <taxon>Bacillus cereus group</taxon>
    </lineage>
</organism>
<dbReference type="EC" id="6.1.1.16" evidence="1"/>
<dbReference type="EMBL" id="CP000001">
    <property type="protein sequence ID" value="AAU20146.1"/>
    <property type="molecule type" value="Genomic_DNA"/>
</dbReference>
<dbReference type="RefSeq" id="WP_000152268.1">
    <property type="nucleotide sequence ID" value="NZ_CP009968.1"/>
</dbReference>
<dbReference type="SMR" id="Q63HB0"/>
<dbReference type="GeneID" id="45020134"/>
<dbReference type="KEGG" id="bcz:BCE33L0085"/>
<dbReference type="PATRIC" id="fig|288681.22.peg.67"/>
<dbReference type="Proteomes" id="UP000002612">
    <property type="component" value="Chromosome"/>
</dbReference>
<dbReference type="GO" id="GO:0005829">
    <property type="term" value="C:cytosol"/>
    <property type="evidence" value="ECO:0007669"/>
    <property type="project" value="TreeGrafter"/>
</dbReference>
<dbReference type="GO" id="GO:0005524">
    <property type="term" value="F:ATP binding"/>
    <property type="evidence" value="ECO:0007669"/>
    <property type="project" value="UniProtKB-UniRule"/>
</dbReference>
<dbReference type="GO" id="GO:0004817">
    <property type="term" value="F:cysteine-tRNA ligase activity"/>
    <property type="evidence" value="ECO:0007669"/>
    <property type="project" value="UniProtKB-UniRule"/>
</dbReference>
<dbReference type="GO" id="GO:0008270">
    <property type="term" value="F:zinc ion binding"/>
    <property type="evidence" value="ECO:0007669"/>
    <property type="project" value="UniProtKB-UniRule"/>
</dbReference>
<dbReference type="GO" id="GO:0006423">
    <property type="term" value="P:cysteinyl-tRNA aminoacylation"/>
    <property type="evidence" value="ECO:0007669"/>
    <property type="project" value="UniProtKB-UniRule"/>
</dbReference>
<dbReference type="CDD" id="cd00672">
    <property type="entry name" value="CysRS_core"/>
    <property type="match status" value="1"/>
</dbReference>
<dbReference type="FunFam" id="1.20.120.1910:FF:000002">
    <property type="entry name" value="Cysteine--tRNA ligase"/>
    <property type="match status" value="1"/>
</dbReference>
<dbReference type="FunFam" id="3.40.50.620:FF:000009">
    <property type="entry name" value="Cysteine--tRNA ligase"/>
    <property type="match status" value="1"/>
</dbReference>
<dbReference type="Gene3D" id="1.20.120.1910">
    <property type="entry name" value="Cysteine-tRNA ligase, C-terminal anti-codon recognition domain"/>
    <property type="match status" value="1"/>
</dbReference>
<dbReference type="Gene3D" id="3.40.50.620">
    <property type="entry name" value="HUPs"/>
    <property type="match status" value="1"/>
</dbReference>
<dbReference type="HAMAP" id="MF_00041">
    <property type="entry name" value="Cys_tRNA_synth"/>
    <property type="match status" value="1"/>
</dbReference>
<dbReference type="InterPro" id="IPR015803">
    <property type="entry name" value="Cys-tRNA-ligase"/>
</dbReference>
<dbReference type="InterPro" id="IPR015273">
    <property type="entry name" value="Cys-tRNA-synt_Ia_DALR"/>
</dbReference>
<dbReference type="InterPro" id="IPR024909">
    <property type="entry name" value="Cys-tRNA/MSH_ligase"/>
</dbReference>
<dbReference type="InterPro" id="IPR014729">
    <property type="entry name" value="Rossmann-like_a/b/a_fold"/>
</dbReference>
<dbReference type="InterPro" id="IPR032678">
    <property type="entry name" value="tRNA-synt_1_cat_dom"/>
</dbReference>
<dbReference type="InterPro" id="IPR009080">
    <property type="entry name" value="tRNAsynth_Ia_anticodon-bd"/>
</dbReference>
<dbReference type="NCBIfam" id="TIGR00435">
    <property type="entry name" value="cysS"/>
    <property type="match status" value="1"/>
</dbReference>
<dbReference type="PANTHER" id="PTHR10890:SF3">
    <property type="entry name" value="CYSTEINE--TRNA LIGASE, CYTOPLASMIC"/>
    <property type="match status" value="1"/>
</dbReference>
<dbReference type="PANTHER" id="PTHR10890">
    <property type="entry name" value="CYSTEINYL-TRNA SYNTHETASE"/>
    <property type="match status" value="1"/>
</dbReference>
<dbReference type="Pfam" id="PF09190">
    <property type="entry name" value="DALR_2"/>
    <property type="match status" value="1"/>
</dbReference>
<dbReference type="Pfam" id="PF01406">
    <property type="entry name" value="tRNA-synt_1e"/>
    <property type="match status" value="1"/>
</dbReference>
<dbReference type="PRINTS" id="PR00983">
    <property type="entry name" value="TRNASYNTHCYS"/>
</dbReference>
<dbReference type="SMART" id="SM00840">
    <property type="entry name" value="DALR_2"/>
    <property type="match status" value="1"/>
</dbReference>
<dbReference type="SUPFAM" id="SSF47323">
    <property type="entry name" value="Anticodon-binding domain of a subclass of class I aminoacyl-tRNA synthetases"/>
    <property type="match status" value="1"/>
</dbReference>
<dbReference type="SUPFAM" id="SSF52374">
    <property type="entry name" value="Nucleotidylyl transferase"/>
    <property type="match status" value="1"/>
</dbReference>
<protein>
    <recommendedName>
        <fullName evidence="1">Cysteine--tRNA ligase</fullName>
        <ecNumber evidence="1">6.1.1.16</ecNumber>
    </recommendedName>
    <alternativeName>
        <fullName evidence="1">Cysteinyl-tRNA synthetase</fullName>
        <shortName evidence="1">CysRS</shortName>
    </alternativeName>
</protein>
<evidence type="ECO:0000255" key="1">
    <source>
        <dbReference type="HAMAP-Rule" id="MF_00041"/>
    </source>
</evidence>
<gene>
    <name evidence="1" type="primary">cysS</name>
    <name type="ordered locus">BCE33L0085</name>
</gene>
<keyword id="KW-0030">Aminoacyl-tRNA synthetase</keyword>
<keyword id="KW-0067">ATP-binding</keyword>
<keyword id="KW-0963">Cytoplasm</keyword>
<keyword id="KW-0436">Ligase</keyword>
<keyword id="KW-0479">Metal-binding</keyword>
<keyword id="KW-0547">Nucleotide-binding</keyword>
<keyword id="KW-0597">Phosphoprotein</keyword>
<keyword id="KW-0648">Protein biosynthesis</keyword>
<keyword id="KW-0862">Zinc</keyword>
<proteinExistence type="inferred from homology"/>
<reference key="1">
    <citation type="journal article" date="2006" name="J. Bacteriol.">
        <title>Pathogenomic sequence analysis of Bacillus cereus and Bacillus thuringiensis isolates closely related to Bacillus anthracis.</title>
        <authorList>
            <person name="Han C.S."/>
            <person name="Xie G."/>
            <person name="Challacombe J.F."/>
            <person name="Altherr M.R."/>
            <person name="Bhotika S.S."/>
            <person name="Bruce D."/>
            <person name="Campbell C.S."/>
            <person name="Campbell M.L."/>
            <person name="Chen J."/>
            <person name="Chertkov O."/>
            <person name="Cleland C."/>
            <person name="Dimitrijevic M."/>
            <person name="Doggett N.A."/>
            <person name="Fawcett J.J."/>
            <person name="Glavina T."/>
            <person name="Goodwin L.A."/>
            <person name="Hill K.K."/>
            <person name="Hitchcock P."/>
            <person name="Jackson P.J."/>
            <person name="Keim P."/>
            <person name="Kewalramani A.R."/>
            <person name="Longmire J."/>
            <person name="Lucas S."/>
            <person name="Malfatti S."/>
            <person name="McMurry K."/>
            <person name="Meincke L.J."/>
            <person name="Misra M."/>
            <person name="Moseman B.L."/>
            <person name="Mundt M."/>
            <person name="Munk A.C."/>
            <person name="Okinaka R.T."/>
            <person name="Parson-Quintana B."/>
            <person name="Reilly L.P."/>
            <person name="Richardson P."/>
            <person name="Robinson D.L."/>
            <person name="Rubin E."/>
            <person name="Saunders E."/>
            <person name="Tapia R."/>
            <person name="Tesmer J.G."/>
            <person name="Thayer N."/>
            <person name="Thompson L.S."/>
            <person name="Tice H."/>
            <person name="Ticknor L.O."/>
            <person name="Wills P.L."/>
            <person name="Brettin T.S."/>
            <person name="Gilna P."/>
        </authorList>
    </citation>
    <scope>NUCLEOTIDE SEQUENCE [LARGE SCALE GENOMIC DNA]</scope>
    <source>
        <strain>ZK / E33L</strain>
    </source>
</reference>
<feature type="chain" id="PRO_0000159346" description="Cysteine--tRNA ligase">
    <location>
        <begin position="1"/>
        <end position="465"/>
    </location>
</feature>
<feature type="short sequence motif" description="'HIGH' region">
    <location>
        <begin position="31"/>
        <end position="41"/>
    </location>
</feature>
<feature type="short sequence motif" description="'KMSKS' region">
    <location>
        <begin position="266"/>
        <end position="270"/>
    </location>
</feature>
<feature type="binding site" evidence="1">
    <location>
        <position position="29"/>
    </location>
    <ligand>
        <name>Zn(2+)</name>
        <dbReference type="ChEBI" id="CHEBI:29105"/>
    </ligand>
</feature>
<feature type="binding site" evidence="1">
    <location>
        <position position="209"/>
    </location>
    <ligand>
        <name>Zn(2+)</name>
        <dbReference type="ChEBI" id="CHEBI:29105"/>
    </ligand>
</feature>
<feature type="binding site" evidence="1">
    <location>
        <position position="234"/>
    </location>
    <ligand>
        <name>Zn(2+)</name>
        <dbReference type="ChEBI" id="CHEBI:29105"/>
    </ligand>
</feature>
<feature type="binding site" evidence="1">
    <location>
        <position position="238"/>
    </location>
    <ligand>
        <name>Zn(2+)</name>
        <dbReference type="ChEBI" id="CHEBI:29105"/>
    </ligand>
</feature>
<feature type="binding site" evidence="1">
    <location>
        <position position="269"/>
    </location>
    <ligand>
        <name>ATP</name>
        <dbReference type="ChEBI" id="CHEBI:30616"/>
    </ligand>
</feature>
<feature type="modified residue" description="Phosphoserine" evidence="1">
    <location>
        <position position="270"/>
    </location>
</feature>
<name>SYC_BACCZ</name>